<proteinExistence type="inferred from homology"/>
<keyword id="KW-0012">Acyltransferase</keyword>
<keyword id="KW-0441">Lipid A biosynthesis</keyword>
<keyword id="KW-0444">Lipid biosynthesis</keyword>
<keyword id="KW-0443">Lipid metabolism</keyword>
<keyword id="KW-1185">Reference proteome</keyword>
<keyword id="KW-0677">Repeat</keyword>
<keyword id="KW-0808">Transferase</keyword>
<sequence length="352" mass="36034">MSDPVFFSSVGPILLAEVAALAGAALPEGLDRELAIRGAAPLESAGPDDLAYMDNAKYAEALGLTRARACLVSPRFAARVPEGTIALVTPQPYRGFAKVLARLFPSAARPTSLFGATGVSPGSFVHPAARLEPGVVVDPGVVIGPGAEIGAETVLAAGAVIGPGTRIGRGCAVGPGASVLHALIGNRVIIHGGARIGQDGFGFAMGAGGHLKVPQVGRVIIQDDVEIGANTTIDRGASRDTIIGEGTKIDNLVQIAHNVVIGRHCVIVAQVGISGSTTLEDYVVLGGQVGVVGHLRIGMGAQIAGSSNINKDVPPGARWGGTPAKPVREWFREMTTLKRIAARERLAEDTAE</sequence>
<organism>
    <name type="scientific">Methylobacterium nodulans (strain LMG 21967 / CNCM I-2342 / ORS 2060)</name>
    <dbReference type="NCBI Taxonomy" id="460265"/>
    <lineage>
        <taxon>Bacteria</taxon>
        <taxon>Pseudomonadati</taxon>
        <taxon>Pseudomonadota</taxon>
        <taxon>Alphaproteobacteria</taxon>
        <taxon>Hyphomicrobiales</taxon>
        <taxon>Methylobacteriaceae</taxon>
        <taxon>Methylobacterium</taxon>
    </lineage>
</organism>
<protein>
    <recommendedName>
        <fullName evidence="1">UDP-3-O-acylglucosamine N-acyltransferase</fullName>
        <ecNumber evidence="1">2.3.1.191</ecNumber>
    </recommendedName>
</protein>
<feature type="chain" id="PRO_1000190896" description="UDP-3-O-acylglucosamine N-acyltransferase">
    <location>
        <begin position="1"/>
        <end position="352"/>
    </location>
</feature>
<feature type="active site" description="Proton acceptor" evidence="1">
    <location>
        <position position="257"/>
    </location>
</feature>
<accession>B8INJ6</accession>
<gene>
    <name evidence="1" type="primary">lpxD</name>
    <name type="ordered locus">Mnod_1530</name>
</gene>
<reference key="1">
    <citation type="submission" date="2009-01" db="EMBL/GenBank/DDBJ databases">
        <title>Complete sequence of chromosome of Methylobacterium nodulans ORS 2060.</title>
        <authorList>
            <consortium name="US DOE Joint Genome Institute"/>
            <person name="Lucas S."/>
            <person name="Copeland A."/>
            <person name="Lapidus A."/>
            <person name="Glavina del Rio T."/>
            <person name="Dalin E."/>
            <person name="Tice H."/>
            <person name="Bruce D."/>
            <person name="Goodwin L."/>
            <person name="Pitluck S."/>
            <person name="Sims D."/>
            <person name="Brettin T."/>
            <person name="Detter J.C."/>
            <person name="Han C."/>
            <person name="Larimer F."/>
            <person name="Land M."/>
            <person name="Hauser L."/>
            <person name="Kyrpides N."/>
            <person name="Ivanova N."/>
            <person name="Marx C.J."/>
            <person name="Richardson P."/>
        </authorList>
    </citation>
    <scope>NUCLEOTIDE SEQUENCE [LARGE SCALE GENOMIC DNA]</scope>
    <source>
        <strain>LMG 21967 / CNCM I-2342 / ORS 2060</strain>
    </source>
</reference>
<dbReference type="EC" id="2.3.1.191" evidence="1"/>
<dbReference type="EMBL" id="CP001349">
    <property type="protein sequence ID" value="ACL56522.1"/>
    <property type="molecule type" value="Genomic_DNA"/>
</dbReference>
<dbReference type="RefSeq" id="WP_015928217.1">
    <property type="nucleotide sequence ID" value="NC_011894.1"/>
</dbReference>
<dbReference type="SMR" id="B8INJ6"/>
<dbReference type="STRING" id="460265.Mnod_1530"/>
<dbReference type="KEGG" id="mno:Mnod_1530"/>
<dbReference type="eggNOG" id="COG1044">
    <property type="taxonomic scope" value="Bacteria"/>
</dbReference>
<dbReference type="HOGENOM" id="CLU_049865_0_2_5"/>
<dbReference type="OrthoDB" id="9784739at2"/>
<dbReference type="UniPathway" id="UPA00973"/>
<dbReference type="Proteomes" id="UP000008207">
    <property type="component" value="Chromosome"/>
</dbReference>
<dbReference type="GO" id="GO:0016020">
    <property type="term" value="C:membrane"/>
    <property type="evidence" value="ECO:0007669"/>
    <property type="project" value="GOC"/>
</dbReference>
<dbReference type="GO" id="GO:0016410">
    <property type="term" value="F:N-acyltransferase activity"/>
    <property type="evidence" value="ECO:0007669"/>
    <property type="project" value="InterPro"/>
</dbReference>
<dbReference type="GO" id="GO:0009245">
    <property type="term" value="P:lipid A biosynthetic process"/>
    <property type="evidence" value="ECO:0007669"/>
    <property type="project" value="UniProtKB-UniRule"/>
</dbReference>
<dbReference type="CDD" id="cd03352">
    <property type="entry name" value="LbH_LpxD"/>
    <property type="match status" value="1"/>
</dbReference>
<dbReference type="Gene3D" id="2.160.10.10">
    <property type="entry name" value="Hexapeptide repeat proteins"/>
    <property type="match status" value="1"/>
</dbReference>
<dbReference type="Gene3D" id="3.40.1390.10">
    <property type="entry name" value="MurE/MurF, N-terminal domain"/>
    <property type="match status" value="1"/>
</dbReference>
<dbReference type="HAMAP" id="MF_00523">
    <property type="entry name" value="LpxD"/>
    <property type="match status" value="1"/>
</dbReference>
<dbReference type="InterPro" id="IPR001451">
    <property type="entry name" value="Hexapep"/>
</dbReference>
<dbReference type="InterPro" id="IPR018357">
    <property type="entry name" value="Hexapep_transf_CS"/>
</dbReference>
<dbReference type="InterPro" id="IPR007691">
    <property type="entry name" value="LpxD"/>
</dbReference>
<dbReference type="InterPro" id="IPR011004">
    <property type="entry name" value="Trimer_LpxA-like_sf"/>
</dbReference>
<dbReference type="InterPro" id="IPR020573">
    <property type="entry name" value="UDP_GlcNAc_AcTrfase_non-rep"/>
</dbReference>
<dbReference type="NCBIfam" id="TIGR01853">
    <property type="entry name" value="lipid_A_lpxD"/>
    <property type="match status" value="1"/>
</dbReference>
<dbReference type="NCBIfam" id="NF002060">
    <property type="entry name" value="PRK00892.1"/>
    <property type="match status" value="1"/>
</dbReference>
<dbReference type="PANTHER" id="PTHR43378">
    <property type="entry name" value="UDP-3-O-ACYLGLUCOSAMINE N-ACYLTRANSFERASE"/>
    <property type="match status" value="1"/>
</dbReference>
<dbReference type="PANTHER" id="PTHR43378:SF2">
    <property type="entry name" value="UDP-3-O-ACYLGLUCOSAMINE N-ACYLTRANSFERASE 1, MITOCHONDRIAL-RELATED"/>
    <property type="match status" value="1"/>
</dbReference>
<dbReference type="Pfam" id="PF00132">
    <property type="entry name" value="Hexapep"/>
    <property type="match status" value="2"/>
</dbReference>
<dbReference type="Pfam" id="PF04613">
    <property type="entry name" value="LpxD"/>
    <property type="match status" value="1"/>
</dbReference>
<dbReference type="SUPFAM" id="SSF51161">
    <property type="entry name" value="Trimeric LpxA-like enzymes"/>
    <property type="match status" value="1"/>
</dbReference>
<dbReference type="PROSITE" id="PS00101">
    <property type="entry name" value="HEXAPEP_TRANSFERASES"/>
    <property type="match status" value="1"/>
</dbReference>
<comment type="function">
    <text evidence="1">Catalyzes the N-acylation of UDP-3-O-acylglucosamine using 3-hydroxyacyl-ACP as the acyl donor. Is involved in the biosynthesis of lipid A, a phosphorylated glycolipid that anchors the lipopolysaccharide to the outer membrane of the cell.</text>
</comment>
<comment type="catalytic activity">
    <reaction evidence="1">
        <text>a UDP-3-O-[(3R)-3-hydroxyacyl]-alpha-D-glucosamine + a (3R)-hydroxyacyl-[ACP] = a UDP-2-N,3-O-bis[(3R)-3-hydroxyacyl]-alpha-D-glucosamine + holo-[ACP] + H(+)</text>
        <dbReference type="Rhea" id="RHEA:53836"/>
        <dbReference type="Rhea" id="RHEA-COMP:9685"/>
        <dbReference type="Rhea" id="RHEA-COMP:9945"/>
        <dbReference type="ChEBI" id="CHEBI:15378"/>
        <dbReference type="ChEBI" id="CHEBI:64479"/>
        <dbReference type="ChEBI" id="CHEBI:78827"/>
        <dbReference type="ChEBI" id="CHEBI:137740"/>
        <dbReference type="ChEBI" id="CHEBI:137748"/>
        <dbReference type="EC" id="2.3.1.191"/>
    </reaction>
</comment>
<comment type="pathway">
    <text evidence="1">Bacterial outer membrane biogenesis; LPS lipid A biosynthesis.</text>
</comment>
<comment type="subunit">
    <text evidence="1">Homotrimer.</text>
</comment>
<comment type="similarity">
    <text evidence="1">Belongs to the transferase hexapeptide repeat family. LpxD subfamily.</text>
</comment>
<evidence type="ECO:0000255" key="1">
    <source>
        <dbReference type="HAMAP-Rule" id="MF_00523"/>
    </source>
</evidence>
<name>LPXD_METNO</name>